<sequence length="426" mass="47078">MSGKQDLSPLGLYSSYDPTKGLISYTSLYGSGTTVTFEELQIFVNKKITQGILFGTRIGAAGLAIIVLWMVSKNRKTPIFIINQISLFLILLHSSLFLRYLLGDYASVVFNFTLFSQSISRNDVHVYGATNMIQVLLVAAVEISLIFQVRVIFKGDSYKGVGRILTSISAVLGFTTVVMYFITAVKSMTSVYSDLTKTSDRYFFNIASILLSSSVNFMTLLLTVKLILAVRSRRFLGLKQFDSFHVLLIMSFQTLIFPSILFILAYALNPNQGTDTLTSIATLLVTLSLPLSSMWATSANNSSHPSSINTQFRQRNYDDVSFKTGITSFYSESSKPSSKYRHTNNLYDLYPVSRTSNSRCNGYPNDGSKLAPNPNCVGHNGSTMSVNDKNGAHATCVQNNVTLNTDSTLNYSNVDTQDTSKILMTT</sequence>
<protein>
    <recommendedName>
        <fullName>Pheromone alpha factor receptor</fullName>
    </recommendedName>
</protein>
<organism>
    <name type="scientific">Lachancea kluyveri</name>
    <name type="common">Yeast</name>
    <name type="synonym">Saccharomyces kluyveri</name>
    <dbReference type="NCBI Taxonomy" id="4934"/>
    <lineage>
        <taxon>Eukaryota</taxon>
        <taxon>Fungi</taxon>
        <taxon>Dikarya</taxon>
        <taxon>Ascomycota</taxon>
        <taxon>Saccharomycotina</taxon>
        <taxon>Saccharomycetes</taxon>
        <taxon>Saccharomycetales</taxon>
        <taxon>Saccharomycetaceae</taxon>
        <taxon>Lachancea</taxon>
    </lineage>
</organism>
<proteinExistence type="inferred from homology"/>
<evidence type="ECO:0000255" key="1"/>
<evidence type="ECO:0000305" key="2"/>
<feature type="chain" id="PRO_0000195069" description="Pheromone alpha factor receptor">
    <location>
        <begin position="1"/>
        <end position="426"/>
    </location>
</feature>
<feature type="transmembrane region" description="Helical" evidence="1">
    <location>
        <begin position="50"/>
        <end position="72"/>
    </location>
</feature>
<feature type="transmembrane region" description="Helical" evidence="1">
    <location>
        <begin position="79"/>
        <end position="101"/>
    </location>
</feature>
<feature type="transmembrane region" description="Helical" evidence="1">
    <location>
        <begin position="131"/>
        <end position="153"/>
    </location>
</feature>
<feature type="transmembrane region" description="Helical" evidence="1">
    <location>
        <begin position="160"/>
        <end position="182"/>
    </location>
</feature>
<feature type="transmembrane region" description="Helical" evidence="1">
    <location>
        <begin position="202"/>
        <end position="224"/>
    </location>
</feature>
<feature type="transmembrane region" description="Helical" evidence="1">
    <location>
        <begin position="245"/>
        <end position="267"/>
    </location>
</feature>
<feature type="transmembrane region" description="Helical" evidence="1">
    <location>
        <begin position="277"/>
        <end position="299"/>
    </location>
</feature>
<feature type="sequence conflict" description="In Ref. 1." evidence="2" ref="1">
    <original>Y</original>
    <variation>N</variation>
    <location>
        <position position="13"/>
    </location>
</feature>
<keyword id="KW-0297">G-protein coupled receptor</keyword>
<keyword id="KW-0472">Membrane</keyword>
<keyword id="KW-0589">Pheromone response</keyword>
<keyword id="KW-0675">Receptor</keyword>
<keyword id="KW-0807">Transducer</keyword>
<keyword id="KW-0812">Transmembrane</keyword>
<keyword id="KW-1133">Transmembrane helix</keyword>
<comment type="function">
    <text>Receptor for the peptide pheromone alpha factor, the mating factor of yeast.</text>
</comment>
<comment type="subcellular location">
    <subcellularLocation>
        <location>Membrane</location>
        <topology>Multi-pass membrane protein</topology>
    </subcellularLocation>
</comment>
<comment type="similarity">
    <text evidence="2">Belongs to the G-protein coupled receptor 4 family.</text>
</comment>
<accession>P12384</accession>
<name>STE2_LACKL</name>
<reference key="1">
    <citation type="journal article" date="1988" name="Proc. Natl. Acad. Sci. U.S.A.">
        <title>STE2 protein of Saccharomyces kluyveri is a member of the rhodopsin/beta-adrenergic receptor family and is responsible for recognition of the peptide ligand alpha factor.</title>
        <authorList>
            <person name="Marsh L."/>
            <person name="Herskowitz I."/>
        </authorList>
    </citation>
    <scope>NUCLEOTIDE SEQUENCE [GENOMIC DNA]</scope>
    <source>
        <strain>XM8-2</strain>
    </source>
</reference>
<reference key="2">
    <citation type="submission" date="1988-08" db="EMBL/GenBank/DDBJ databases">
        <authorList>
            <person name="Marsh L."/>
        </authorList>
    </citation>
    <scope>NUCLEOTIDE SEQUENCE [GENOMIC DNA]</scope>
</reference>
<gene>
    <name type="primary">STE2</name>
</gene>
<dbReference type="EMBL" id="J03265">
    <property type="protein sequence ID" value="AAA34961.1"/>
    <property type="molecule type" value="Genomic_DNA"/>
</dbReference>
<dbReference type="PIR" id="A94801">
    <property type="entry name" value="A30212"/>
</dbReference>
<dbReference type="SMR" id="P12384"/>
<dbReference type="GO" id="GO:0038038">
    <property type="term" value="C:G protein-coupled receptor homodimeric complex"/>
    <property type="evidence" value="ECO:0007669"/>
    <property type="project" value="TreeGrafter"/>
</dbReference>
<dbReference type="GO" id="GO:0004932">
    <property type="term" value="F:mating-type factor pheromone receptor activity"/>
    <property type="evidence" value="ECO:0007669"/>
    <property type="project" value="InterPro"/>
</dbReference>
<dbReference type="GO" id="GO:0000750">
    <property type="term" value="P:pheromone-dependent signal transduction involved in conjugation with cellular fusion"/>
    <property type="evidence" value="ECO:0007669"/>
    <property type="project" value="TreeGrafter"/>
</dbReference>
<dbReference type="CDD" id="cd14939">
    <property type="entry name" value="7tmD_STE2"/>
    <property type="match status" value="1"/>
</dbReference>
<dbReference type="Gene3D" id="1.10.287.920">
    <property type="entry name" value="Pheromone alpha factor receptor"/>
    <property type="match status" value="1"/>
</dbReference>
<dbReference type="InterPro" id="IPR000366">
    <property type="entry name" value="GPCR_STE2"/>
</dbReference>
<dbReference type="InterPro" id="IPR027458">
    <property type="entry name" value="STE2_TM1-TM2_sf"/>
</dbReference>
<dbReference type="PANTHER" id="PTHR28009">
    <property type="entry name" value="PHEROMONE ALPHA FACTOR RECEPTOR"/>
    <property type="match status" value="1"/>
</dbReference>
<dbReference type="PANTHER" id="PTHR28009:SF1">
    <property type="entry name" value="PHEROMONE ALPHA FACTOR RECEPTOR"/>
    <property type="match status" value="1"/>
</dbReference>
<dbReference type="Pfam" id="PF02116">
    <property type="entry name" value="STE2"/>
    <property type="match status" value="1"/>
</dbReference>
<dbReference type="PRINTS" id="PR00250">
    <property type="entry name" value="GPCRSTE2"/>
</dbReference>